<reference key="1">
    <citation type="journal article" date="2009" name="PLoS Biol.">
        <title>Lineage-specific biology revealed by a finished genome assembly of the mouse.</title>
        <authorList>
            <person name="Church D.M."/>
            <person name="Goodstadt L."/>
            <person name="Hillier L.W."/>
            <person name="Zody M.C."/>
            <person name="Goldstein S."/>
            <person name="She X."/>
            <person name="Bult C.J."/>
            <person name="Agarwala R."/>
            <person name="Cherry J.L."/>
            <person name="DiCuccio M."/>
            <person name="Hlavina W."/>
            <person name="Kapustin Y."/>
            <person name="Meric P."/>
            <person name="Maglott D."/>
            <person name="Birtle Z."/>
            <person name="Marques A.C."/>
            <person name="Graves T."/>
            <person name="Zhou S."/>
            <person name="Teague B."/>
            <person name="Potamousis K."/>
            <person name="Churas C."/>
            <person name="Place M."/>
            <person name="Herschleb J."/>
            <person name="Runnheim R."/>
            <person name="Forrest D."/>
            <person name="Amos-Landgraf J."/>
            <person name="Schwartz D.C."/>
            <person name="Cheng Z."/>
            <person name="Lindblad-Toh K."/>
            <person name="Eichler E.E."/>
            <person name="Ponting C.P."/>
        </authorList>
    </citation>
    <scope>NUCLEOTIDE SEQUENCE [LARGE SCALE GENOMIC DNA]</scope>
    <source>
        <strain>C57BL/6J</strain>
    </source>
</reference>
<reference key="2">
    <citation type="journal article" date="2004" name="Genome Res.">
        <title>The status, quality, and expansion of the NIH full-length cDNA project: the Mammalian Gene Collection (MGC).</title>
        <authorList>
            <consortium name="The MGC Project Team"/>
        </authorList>
    </citation>
    <scope>NUCLEOTIDE SEQUENCE [LARGE SCALE MRNA] (ISOFORM 1)</scope>
    <source>
        <tissue>Brain</tissue>
    </source>
</reference>
<reference key="3">
    <citation type="journal article" date="2005" name="Science">
        <title>The transcriptional landscape of the mammalian genome.</title>
        <authorList>
            <person name="Carninci P."/>
            <person name="Kasukawa T."/>
            <person name="Katayama S."/>
            <person name="Gough J."/>
            <person name="Frith M.C."/>
            <person name="Maeda N."/>
            <person name="Oyama R."/>
            <person name="Ravasi T."/>
            <person name="Lenhard B."/>
            <person name="Wells C."/>
            <person name="Kodzius R."/>
            <person name="Shimokawa K."/>
            <person name="Bajic V.B."/>
            <person name="Brenner S.E."/>
            <person name="Batalov S."/>
            <person name="Forrest A.R."/>
            <person name="Zavolan M."/>
            <person name="Davis M.J."/>
            <person name="Wilming L.G."/>
            <person name="Aidinis V."/>
            <person name="Allen J.E."/>
            <person name="Ambesi-Impiombato A."/>
            <person name="Apweiler R."/>
            <person name="Aturaliya R.N."/>
            <person name="Bailey T.L."/>
            <person name="Bansal M."/>
            <person name="Baxter L."/>
            <person name="Beisel K.W."/>
            <person name="Bersano T."/>
            <person name="Bono H."/>
            <person name="Chalk A.M."/>
            <person name="Chiu K.P."/>
            <person name="Choudhary V."/>
            <person name="Christoffels A."/>
            <person name="Clutterbuck D.R."/>
            <person name="Crowe M.L."/>
            <person name="Dalla E."/>
            <person name="Dalrymple B.P."/>
            <person name="de Bono B."/>
            <person name="Della Gatta G."/>
            <person name="di Bernardo D."/>
            <person name="Down T."/>
            <person name="Engstrom P."/>
            <person name="Fagiolini M."/>
            <person name="Faulkner G."/>
            <person name="Fletcher C.F."/>
            <person name="Fukushima T."/>
            <person name="Furuno M."/>
            <person name="Futaki S."/>
            <person name="Gariboldi M."/>
            <person name="Georgii-Hemming P."/>
            <person name="Gingeras T.R."/>
            <person name="Gojobori T."/>
            <person name="Green R.E."/>
            <person name="Gustincich S."/>
            <person name="Harbers M."/>
            <person name="Hayashi Y."/>
            <person name="Hensch T.K."/>
            <person name="Hirokawa N."/>
            <person name="Hill D."/>
            <person name="Huminiecki L."/>
            <person name="Iacono M."/>
            <person name="Ikeo K."/>
            <person name="Iwama A."/>
            <person name="Ishikawa T."/>
            <person name="Jakt M."/>
            <person name="Kanapin A."/>
            <person name="Katoh M."/>
            <person name="Kawasawa Y."/>
            <person name="Kelso J."/>
            <person name="Kitamura H."/>
            <person name="Kitano H."/>
            <person name="Kollias G."/>
            <person name="Krishnan S.P."/>
            <person name="Kruger A."/>
            <person name="Kummerfeld S.K."/>
            <person name="Kurochkin I.V."/>
            <person name="Lareau L.F."/>
            <person name="Lazarevic D."/>
            <person name="Lipovich L."/>
            <person name="Liu J."/>
            <person name="Liuni S."/>
            <person name="McWilliam S."/>
            <person name="Madan Babu M."/>
            <person name="Madera M."/>
            <person name="Marchionni L."/>
            <person name="Matsuda H."/>
            <person name="Matsuzawa S."/>
            <person name="Miki H."/>
            <person name="Mignone F."/>
            <person name="Miyake S."/>
            <person name="Morris K."/>
            <person name="Mottagui-Tabar S."/>
            <person name="Mulder N."/>
            <person name="Nakano N."/>
            <person name="Nakauchi H."/>
            <person name="Ng P."/>
            <person name="Nilsson R."/>
            <person name="Nishiguchi S."/>
            <person name="Nishikawa S."/>
            <person name="Nori F."/>
            <person name="Ohara O."/>
            <person name="Okazaki Y."/>
            <person name="Orlando V."/>
            <person name="Pang K.C."/>
            <person name="Pavan W.J."/>
            <person name="Pavesi G."/>
            <person name="Pesole G."/>
            <person name="Petrovsky N."/>
            <person name="Piazza S."/>
            <person name="Reed J."/>
            <person name="Reid J.F."/>
            <person name="Ring B.Z."/>
            <person name="Ringwald M."/>
            <person name="Rost B."/>
            <person name="Ruan Y."/>
            <person name="Salzberg S.L."/>
            <person name="Sandelin A."/>
            <person name="Schneider C."/>
            <person name="Schoenbach C."/>
            <person name="Sekiguchi K."/>
            <person name="Semple C.A."/>
            <person name="Seno S."/>
            <person name="Sessa L."/>
            <person name="Sheng Y."/>
            <person name="Shibata Y."/>
            <person name="Shimada H."/>
            <person name="Shimada K."/>
            <person name="Silva D."/>
            <person name="Sinclair B."/>
            <person name="Sperling S."/>
            <person name="Stupka E."/>
            <person name="Sugiura K."/>
            <person name="Sultana R."/>
            <person name="Takenaka Y."/>
            <person name="Taki K."/>
            <person name="Tammoja K."/>
            <person name="Tan S.L."/>
            <person name="Tang S."/>
            <person name="Taylor M.S."/>
            <person name="Tegner J."/>
            <person name="Teichmann S.A."/>
            <person name="Ueda H.R."/>
            <person name="van Nimwegen E."/>
            <person name="Verardo R."/>
            <person name="Wei C.L."/>
            <person name="Yagi K."/>
            <person name="Yamanishi H."/>
            <person name="Zabarovsky E."/>
            <person name="Zhu S."/>
            <person name="Zimmer A."/>
            <person name="Hide W."/>
            <person name="Bult C."/>
            <person name="Grimmond S.M."/>
            <person name="Teasdale R.D."/>
            <person name="Liu E.T."/>
            <person name="Brusic V."/>
            <person name="Quackenbush J."/>
            <person name="Wahlestedt C."/>
            <person name="Mattick J.S."/>
            <person name="Hume D.A."/>
            <person name="Kai C."/>
            <person name="Sasaki D."/>
            <person name="Tomaru Y."/>
            <person name="Fukuda S."/>
            <person name="Kanamori-Katayama M."/>
            <person name="Suzuki M."/>
            <person name="Aoki J."/>
            <person name="Arakawa T."/>
            <person name="Iida J."/>
            <person name="Imamura K."/>
            <person name="Itoh M."/>
            <person name="Kato T."/>
            <person name="Kawaji H."/>
            <person name="Kawagashira N."/>
            <person name="Kawashima T."/>
            <person name="Kojima M."/>
            <person name="Kondo S."/>
            <person name="Konno H."/>
            <person name="Nakano K."/>
            <person name="Ninomiya N."/>
            <person name="Nishio T."/>
            <person name="Okada M."/>
            <person name="Plessy C."/>
            <person name="Shibata K."/>
            <person name="Shiraki T."/>
            <person name="Suzuki S."/>
            <person name="Tagami M."/>
            <person name="Waki K."/>
            <person name="Watahiki A."/>
            <person name="Okamura-Oho Y."/>
            <person name="Suzuki H."/>
            <person name="Kawai J."/>
            <person name="Hayashizaki Y."/>
        </authorList>
    </citation>
    <scope>NUCLEOTIDE SEQUENCE [LARGE SCALE MRNA] OF 1-531</scope>
    <source>
        <strain>C57BL/6J</strain>
        <tissue>Forelimb</tissue>
        <tissue>Thymus</tissue>
    </source>
</reference>
<reference key="4">
    <citation type="journal article" date="2006" name="Genes Dev.">
        <title>Deficiency of Rbbp1/Arid4a and Rbbp1l1/Arid4b alters epigenetic modifications and suppresses an imprinting defect in the PWS/AS domain.</title>
        <authorList>
            <person name="Wu M.Y."/>
            <person name="Tsai T.F."/>
            <person name="Beaudet A.L."/>
        </authorList>
    </citation>
    <scope>FUNCTION</scope>
    <scope>INTERACTION WITH ARID4A</scope>
    <scope>DISRUPTION PHENOTYPE</scope>
</reference>
<reference key="5">
    <citation type="journal article" date="2008" name="J. Natl. Cancer Inst.">
        <title>Identification of chromatin remodeling genes Arid4a and Arid4b as leukemia suppressor genes.</title>
        <authorList>
            <person name="Wu M.Y."/>
            <person name="Eldin K.W."/>
            <person name="Beaudet A.L."/>
        </authorList>
    </citation>
    <scope>FUNCTION</scope>
    <scope>DISRUPTION PHENOTYPE</scope>
</reference>
<reference key="6">
    <citation type="journal article" date="2010" name="Cell">
        <title>A tissue-specific atlas of mouse protein phosphorylation and expression.</title>
        <authorList>
            <person name="Huttlin E.L."/>
            <person name="Jedrychowski M.P."/>
            <person name="Elias J.E."/>
            <person name="Goswami T."/>
            <person name="Rad R."/>
            <person name="Beausoleil S.A."/>
            <person name="Villen J."/>
            <person name="Haas W."/>
            <person name="Sowa M.E."/>
            <person name="Gygi S.P."/>
        </authorList>
    </citation>
    <scope>PHOSPHORYLATION [LARGE SCALE ANALYSIS] AT SER-668; SER-675; SER-790 AND THR-793</scope>
    <scope>IDENTIFICATION BY MASS SPECTROMETRY [LARGE SCALE ANALYSIS]</scope>
    <source>
        <tissue>Brown adipose tissue</tissue>
        <tissue>Kidney</tissue>
        <tissue>Lung</tissue>
        <tissue>Spleen</tissue>
        <tissue>Testis</tissue>
    </source>
</reference>
<reference key="7">
    <citation type="journal article" date="2013" name="Proc. Natl. Acad. Sci. U.S.A.">
        <title>ARID4A and ARID4B regulate male fertility, a functional link to the AR and RB pathways.</title>
        <authorList>
            <person name="Wu R.C."/>
            <person name="Jiang M."/>
            <person name="Beaudet A.L."/>
            <person name="Wu M.Y."/>
        </authorList>
    </citation>
    <scope>FUNCTION</scope>
    <scope>INTERACTION WITH AR</scope>
    <scope>TISSUE SPECIFICITY</scope>
    <scope>DISRUPTION PHENOTYPE</scope>
</reference>
<gene>
    <name type="primary">Arid4b</name>
    <name type="synonym">Sap180</name>
</gene>
<feature type="chain" id="PRO_0000282864" description="AT-rich interactive domain-containing protein 4B">
    <location>
        <begin position="1"/>
        <end position="1314"/>
    </location>
</feature>
<feature type="domain" description="ARID" evidence="4">
    <location>
        <begin position="306"/>
        <end position="398"/>
    </location>
</feature>
<feature type="domain" description="Tudor-knot" evidence="3">
    <location>
        <begin position="572"/>
        <end position="624"/>
    </location>
</feature>
<feature type="region of interest" description="Disordered" evidence="5">
    <location>
        <begin position="123"/>
        <end position="169"/>
    </location>
</feature>
<feature type="region of interest" description="Disordered" evidence="5">
    <location>
        <begin position="266"/>
        <end position="306"/>
    </location>
</feature>
<feature type="region of interest" description="Disordered" evidence="5">
    <location>
        <begin position="439"/>
        <end position="577"/>
    </location>
</feature>
<feature type="region of interest" description="Disordered" evidence="5">
    <location>
        <begin position="635"/>
        <end position="678"/>
    </location>
</feature>
<feature type="region of interest" description="Disordered" evidence="5">
    <location>
        <begin position="709"/>
        <end position="888"/>
    </location>
</feature>
<feature type="region of interest" description="Disordered" evidence="5">
    <location>
        <begin position="943"/>
        <end position="1215"/>
    </location>
</feature>
<feature type="region of interest" description="Disordered" evidence="5">
    <location>
        <begin position="1256"/>
        <end position="1290"/>
    </location>
</feature>
<feature type="coiled-coil region" evidence="3">
    <location>
        <begin position="1227"/>
        <end position="1272"/>
    </location>
</feature>
<feature type="compositionally biased region" description="Acidic residues" evidence="5">
    <location>
        <begin position="277"/>
        <end position="305"/>
    </location>
</feature>
<feature type="compositionally biased region" description="Basic and acidic residues" evidence="5">
    <location>
        <begin position="439"/>
        <end position="464"/>
    </location>
</feature>
<feature type="compositionally biased region" description="Basic and acidic residues" evidence="5">
    <location>
        <begin position="486"/>
        <end position="511"/>
    </location>
</feature>
<feature type="compositionally biased region" description="Acidic residues" evidence="5">
    <location>
        <begin position="531"/>
        <end position="567"/>
    </location>
</feature>
<feature type="compositionally biased region" description="Basic and acidic residues" evidence="5">
    <location>
        <begin position="643"/>
        <end position="656"/>
    </location>
</feature>
<feature type="compositionally biased region" description="Basic and acidic residues" evidence="5">
    <location>
        <begin position="722"/>
        <end position="754"/>
    </location>
</feature>
<feature type="compositionally biased region" description="Basic and acidic residues" evidence="5">
    <location>
        <begin position="778"/>
        <end position="787"/>
    </location>
</feature>
<feature type="compositionally biased region" description="Acidic residues" evidence="5">
    <location>
        <begin position="788"/>
        <end position="800"/>
    </location>
</feature>
<feature type="compositionally biased region" description="Basic and acidic residues" evidence="5">
    <location>
        <begin position="808"/>
        <end position="817"/>
    </location>
</feature>
<feature type="compositionally biased region" description="Basic and acidic residues" evidence="5">
    <location>
        <begin position="841"/>
        <end position="853"/>
    </location>
</feature>
<feature type="compositionally biased region" description="Basic and acidic residues" evidence="5">
    <location>
        <begin position="997"/>
        <end position="1012"/>
    </location>
</feature>
<feature type="compositionally biased region" description="Polar residues" evidence="5">
    <location>
        <begin position="1013"/>
        <end position="1023"/>
    </location>
</feature>
<feature type="compositionally biased region" description="Low complexity" evidence="5">
    <location>
        <begin position="1030"/>
        <end position="1051"/>
    </location>
</feature>
<feature type="compositionally biased region" description="Basic and acidic residues" evidence="5">
    <location>
        <begin position="1058"/>
        <end position="1067"/>
    </location>
</feature>
<feature type="compositionally biased region" description="Low complexity" evidence="5">
    <location>
        <begin position="1089"/>
        <end position="1103"/>
    </location>
</feature>
<feature type="compositionally biased region" description="Basic residues" evidence="5">
    <location>
        <begin position="1132"/>
        <end position="1150"/>
    </location>
</feature>
<feature type="compositionally biased region" description="Polar residues" evidence="5">
    <location>
        <begin position="1164"/>
        <end position="1186"/>
    </location>
</feature>
<feature type="compositionally biased region" description="Basic and acidic residues" evidence="5">
    <location>
        <begin position="1198"/>
        <end position="1210"/>
    </location>
</feature>
<feature type="compositionally biased region" description="Low complexity" evidence="5">
    <location>
        <begin position="1274"/>
        <end position="1290"/>
    </location>
</feature>
<feature type="modified residue" description="Phosphoserine" evidence="1">
    <location>
        <position position="276"/>
    </location>
</feature>
<feature type="modified residue" description="Phosphoserine" evidence="2">
    <location>
        <position position="295"/>
    </location>
</feature>
<feature type="modified residue" description="Phosphoserine" evidence="2">
    <location>
        <position position="296"/>
    </location>
</feature>
<feature type="modified residue" description="Phosphoserine" evidence="1">
    <location>
        <position position="482"/>
    </location>
</feature>
<feature type="modified residue" description="Phosphoserine" evidence="1">
    <location>
        <position position="666"/>
    </location>
</feature>
<feature type="modified residue" description="Phosphoserine" evidence="10">
    <location>
        <position position="668"/>
    </location>
</feature>
<feature type="modified residue" description="Phosphoserine" evidence="10">
    <location>
        <position position="675"/>
    </location>
</feature>
<feature type="modified residue" description="Phosphoserine" evidence="1">
    <location>
        <position position="717"/>
    </location>
</feature>
<feature type="modified residue" description="Phosphoserine" evidence="1">
    <location>
        <position position="778"/>
    </location>
</feature>
<feature type="modified residue" description="Phosphoserine" evidence="10">
    <location>
        <position position="790"/>
    </location>
</feature>
<feature type="modified residue" description="Phosphothreonine" evidence="10">
    <location>
        <position position="793"/>
    </location>
</feature>
<feature type="modified residue" description="Phosphoserine" evidence="1">
    <location>
        <position position="1016"/>
    </location>
</feature>
<feature type="modified residue" description="Phosphothreonine" evidence="1">
    <location>
        <position position="1028"/>
    </location>
</feature>
<feature type="modified residue" description="Phosphoserine" evidence="1">
    <location>
        <position position="1031"/>
    </location>
</feature>
<feature type="modified residue" description="Phosphothreonine" evidence="1">
    <location>
        <position position="1152"/>
    </location>
</feature>
<feature type="modified residue" description="Phosphoserine" evidence="1">
    <location>
        <position position="1154"/>
    </location>
</feature>
<feature type="modified residue" description="Phosphoserine" evidence="1">
    <location>
        <position position="1155"/>
    </location>
</feature>
<feature type="modified residue" description="Phosphoserine" evidence="1">
    <location>
        <position position="1157"/>
    </location>
</feature>
<feature type="modified residue" description="Phosphoserine" evidence="1">
    <location>
        <position position="1161"/>
    </location>
</feature>
<feature type="cross-link" description="Glycyl lysine isopeptide (Lys-Gly) (interchain with G-Cter in SUMO2)" evidence="1">
    <location>
        <position position="428"/>
    </location>
</feature>
<feature type="cross-link" description="Glycyl lysine isopeptide (Lys-Gly) (interchain with G-Cter in SUMO2)" evidence="1">
    <location>
        <position position="461"/>
    </location>
</feature>
<feature type="cross-link" description="Glycyl lysine isopeptide (Lys-Gly) (interchain with G-Cter in SUMO2)" evidence="1">
    <location>
        <position position="751"/>
    </location>
</feature>
<feature type="splice variant" id="VSP_024236" description="In isoform 2." evidence="9">
    <location>
        <begin position="528"/>
        <end position="614"/>
    </location>
</feature>
<protein>
    <recommendedName>
        <fullName>AT-rich interactive domain-containing protein 4B</fullName>
        <shortName>ARID domain-containing protein 4B</shortName>
    </recommendedName>
    <alternativeName>
        <fullName>180 kDa Sin3-associated polypeptide</fullName>
        <shortName>Sin3-associated polypeptide p180</shortName>
    </alternativeName>
    <alternativeName>
        <fullName>Histone deacetylase complex subunit SAP180</fullName>
    </alternativeName>
</protein>
<dbReference type="EMBL" id="CT025604">
    <property type="protein sequence ID" value="CAM21242.1"/>
    <property type="status" value="ALT_SEQ"/>
    <property type="molecule type" value="Genomic_DNA"/>
</dbReference>
<dbReference type="EMBL" id="CT025604">
    <property type="protein sequence ID" value="CAM21243.1"/>
    <property type="molecule type" value="Genomic_DNA"/>
</dbReference>
<dbReference type="EMBL" id="CT025604">
    <property type="protein sequence ID" value="CAM21244.1"/>
    <property type="molecule type" value="Genomic_DNA"/>
</dbReference>
<dbReference type="EMBL" id="CT025604">
    <property type="protein sequence ID" value="CAM21245.1"/>
    <property type="molecule type" value="Genomic_DNA"/>
</dbReference>
<dbReference type="EMBL" id="BC137783">
    <property type="protein sequence ID" value="AAI37784.1"/>
    <property type="molecule type" value="mRNA"/>
</dbReference>
<dbReference type="EMBL" id="AK031062">
    <property type="protein sequence ID" value="BAC27233.1"/>
    <property type="molecule type" value="mRNA"/>
</dbReference>
<dbReference type="EMBL" id="AK041414">
    <property type="protein sequence ID" value="BAC30936.1"/>
    <property type="molecule type" value="mRNA"/>
</dbReference>
<dbReference type="CCDS" id="CCDS36599.1">
    <molecule id="A2CG63-1"/>
</dbReference>
<dbReference type="CCDS" id="CCDS36600.1">
    <molecule id="A2CG63-2"/>
</dbReference>
<dbReference type="RefSeq" id="NP_919238.1">
    <molecule id="A2CG63-1"/>
    <property type="nucleotide sequence ID" value="NM_194262.2"/>
</dbReference>
<dbReference type="RefSeq" id="NP_937755.1">
    <molecule id="A2CG63-2"/>
    <property type="nucleotide sequence ID" value="NM_198122.2"/>
</dbReference>
<dbReference type="RefSeq" id="XP_006516869.1">
    <molecule id="A2CG63-1"/>
    <property type="nucleotide sequence ID" value="XM_006516806.4"/>
</dbReference>
<dbReference type="RefSeq" id="XP_006516870.1">
    <molecule id="A2CG63-1"/>
    <property type="nucleotide sequence ID" value="XM_006516807.4"/>
</dbReference>
<dbReference type="RefSeq" id="XP_017171137.1">
    <property type="nucleotide sequence ID" value="XM_017315648.1"/>
</dbReference>
<dbReference type="SMR" id="A2CG63"/>
<dbReference type="BioGRID" id="220492">
    <property type="interactions" value="9"/>
</dbReference>
<dbReference type="ComplexPortal" id="CPX-3441">
    <property type="entry name" value="SIN3A histone deacetylase complex, ES cell-specific variant"/>
</dbReference>
<dbReference type="ComplexPortal" id="CPX-3443">
    <property type="entry name" value="SIN3A histone deacetylase complex"/>
</dbReference>
<dbReference type="ComplexPortal" id="CPX-3444">
    <property type="entry name" value="SIN3B histone deacetylase complex"/>
</dbReference>
<dbReference type="FunCoup" id="A2CG63">
    <property type="interactions" value="5070"/>
</dbReference>
<dbReference type="IntAct" id="A2CG63">
    <property type="interactions" value="3"/>
</dbReference>
<dbReference type="MINT" id="A2CG63"/>
<dbReference type="STRING" id="10090.ENSMUSP00000106163"/>
<dbReference type="GlyGen" id="A2CG63">
    <property type="glycosylation" value="2 sites, 2 N-linked glycans (2 sites)"/>
</dbReference>
<dbReference type="iPTMnet" id="A2CG63"/>
<dbReference type="PhosphoSitePlus" id="A2CG63"/>
<dbReference type="jPOST" id="A2CG63"/>
<dbReference type="PaxDb" id="10090-ENSMUSP00000106163"/>
<dbReference type="PeptideAtlas" id="A2CG63"/>
<dbReference type="ProteomicsDB" id="265094">
    <molecule id="A2CG63-1"/>
</dbReference>
<dbReference type="ProteomicsDB" id="265095">
    <molecule id="A2CG63-2"/>
</dbReference>
<dbReference type="Pumba" id="A2CG63"/>
<dbReference type="Antibodypedia" id="20807">
    <property type="antibodies" value="174 antibodies from 31 providers"/>
</dbReference>
<dbReference type="DNASU" id="94246"/>
<dbReference type="Ensembl" id="ENSMUST00000039538.15">
    <molecule id="A2CG63-2"/>
    <property type="protein sequence ID" value="ENSMUSP00000043889.9"/>
    <property type="gene ID" value="ENSMUSG00000039219.19"/>
</dbReference>
<dbReference type="Ensembl" id="ENSMUST00000110534.8">
    <molecule id="A2CG63-1"/>
    <property type="protein sequence ID" value="ENSMUSP00000106163.2"/>
    <property type="gene ID" value="ENSMUSG00000039219.19"/>
</dbReference>
<dbReference type="Ensembl" id="ENSMUST00000110536.8">
    <molecule id="A2CG63-2"/>
    <property type="protein sequence ID" value="ENSMUSP00000106165.2"/>
    <property type="gene ID" value="ENSMUSG00000039219.19"/>
</dbReference>
<dbReference type="GeneID" id="94246"/>
<dbReference type="KEGG" id="mmu:94246"/>
<dbReference type="UCSC" id="uc007pmz.2">
    <molecule id="A2CG63-1"/>
    <property type="organism name" value="mouse"/>
</dbReference>
<dbReference type="UCSC" id="uc007pna.2">
    <molecule id="A2CG63-2"/>
    <property type="organism name" value="mouse"/>
</dbReference>
<dbReference type="AGR" id="MGI:2137512"/>
<dbReference type="CTD" id="51742"/>
<dbReference type="MGI" id="MGI:2137512">
    <property type="gene designation" value="Arid4b"/>
</dbReference>
<dbReference type="VEuPathDB" id="HostDB:ENSMUSG00000039219"/>
<dbReference type="eggNOG" id="KOG2744">
    <property type="taxonomic scope" value="Eukaryota"/>
</dbReference>
<dbReference type="eggNOG" id="KOG3001">
    <property type="taxonomic scope" value="Eukaryota"/>
</dbReference>
<dbReference type="GeneTree" id="ENSGT00940000158149"/>
<dbReference type="HOGENOM" id="CLU_007419_0_0_1"/>
<dbReference type="InParanoid" id="A2CG63"/>
<dbReference type="OMA" id="XCTGQKR"/>
<dbReference type="OrthoDB" id="10068428at2759"/>
<dbReference type="PhylomeDB" id="A2CG63"/>
<dbReference type="TreeFam" id="TF106427"/>
<dbReference type="Reactome" id="R-MMU-3214815">
    <property type="pathway name" value="HDACs deacetylate histones"/>
</dbReference>
<dbReference type="BioGRID-ORCS" id="94246">
    <property type="hits" value="7 hits in 81 CRISPR screens"/>
</dbReference>
<dbReference type="ChiTaRS" id="Arid4b">
    <property type="organism name" value="mouse"/>
</dbReference>
<dbReference type="PRO" id="PR:A2CG63"/>
<dbReference type="Proteomes" id="UP000000589">
    <property type="component" value="Chromosome 13"/>
</dbReference>
<dbReference type="RNAct" id="A2CG63">
    <property type="molecule type" value="protein"/>
</dbReference>
<dbReference type="Bgee" id="ENSMUSG00000039219">
    <property type="expression patterns" value="Expressed in metanephric cortical collecting duct and 254 other cell types or tissues"/>
</dbReference>
<dbReference type="ExpressionAtlas" id="A2CG63">
    <property type="expression patterns" value="baseline and differential"/>
</dbReference>
<dbReference type="GO" id="GO:0005829">
    <property type="term" value="C:cytosol"/>
    <property type="evidence" value="ECO:0007669"/>
    <property type="project" value="Ensembl"/>
</dbReference>
<dbReference type="GO" id="GO:0005739">
    <property type="term" value="C:mitochondrion"/>
    <property type="evidence" value="ECO:0007669"/>
    <property type="project" value="Ensembl"/>
</dbReference>
<dbReference type="GO" id="GO:0005634">
    <property type="term" value="C:nucleus"/>
    <property type="evidence" value="ECO:0000303"/>
    <property type="project" value="ComplexPortal"/>
</dbReference>
<dbReference type="GO" id="GO:0070822">
    <property type="term" value="C:Sin3-type complex"/>
    <property type="evidence" value="ECO:0000303"/>
    <property type="project" value="ComplexPortal"/>
</dbReference>
<dbReference type="GO" id="GO:0003677">
    <property type="term" value="F:DNA binding"/>
    <property type="evidence" value="ECO:0007669"/>
    <property type="project" value="UniProtKB-KW"/>
</dbReference>
<dbReference type="GO" id="GO:0006325">
    <property type="term" value="P:chromatin organization"/>
    <property type="evidence" value="ECO:0000316"/>
    <property type="project" value="MGI"/>
</dbReference>
<dbReference type="GO" id="GO:0097368">
    <property type="term" value="P:establishment of Sertoli cell barrier"/>
    <property type="evidence" value="ECO:0000316"/>
    <property type="project" value="MGI"/>
</dbReference>
<dbReference type="GO" id="GO:0071514">
    <property type="term" value="P:genomic imprinting"/>
    <property type="evidence" value="ECO:0000316"/>
    <property type="project" value="MGI"/>
</dbReference>
<dbReference type="GO" id="GO:0030336">
    <property type="term" value="P:negative regulation of cell migration"/>
    <property type="evidence" value="ECO:0000303"/>
    <property type="project" value="ComplexPortal"/>
</dbReference>
<dbReference type="GO" id="GO:1902455">
    <property type="term" value="P:negative regulation of stem cell population maintenance"/>
    <property type="evidence" value="ECO:0000303"/>
    <property type="project" value="ComplexPortal"/>
</dbReference>
<dbReference type="GO" id="GO:0000122">
    <property type="term" value="P:negative regulation of transcription by RNA polymerase II"/>
    <property type="evidence" value="ECO:0000303"/>
    <property type="project" value="ComplexPortal"/>
</dbReference>
<dbReference type="GO" id="GO:0030512">
    <property type="term" value="P:negative regulation of transforming growth factor beta receptor signaling pathway"/>
    <property type="evidence" value="ECO:0000303"/>
    <property type="project" value="ComplexPortal"/>
</dbReference>
<dbReference type="GO" id="GO:1902459">
    <property type="term" value="P:positive regulation of stem cell population maintenance"/>
    <property type="evidence" value="ECO:0000303"/>
    <property type="project" value="ComplexPortal"/>
</dbReference>
<dbReference type="GO" id="GO:0045944">
    <property type="term" value="P:positive regulation of transcription by RNA polymerase II"/>
    <property type="evidence" value="ECO:0000316"/>
    <property type="project" value="MGI"/>
</dbReference>
<dbReference type="GO" id="GO:0007283">
    <property type="term" value="P:spermatogenesis"/>
    <property type="evidence" value="ECO:0000316"/>
    <property type="project" value="MGI"/>
</dbReference>
<dbReference type="GO" id="GO:0006366">
    <property type="term" value="P:transcription by RNA polymerase II"/>
    <property type="evidence" value="ECO:0000316"/>
    <property type="project" value="MGI"/>
</dbReference>
<dbReference type="CDD" id="cd16883">
    <property type="entry name" value="ARID_ARID4B"/>
    <property type="match status" value="1"/>
</dbReference>
<dbReference type="CDD" id="cd20460">
    <property type="entry name" value="Tudor_ARID4B_rpt1"/>
    <property type="match status" value="1"/>
</dbReference>
<dbReference type="CDD" id="cd20462">
    <property type="entry name" value="Tudor_ARID4B_rpt2"/>
    <property type="match status" value="1"/>
</dbReference>
<dbReference type="FunFam" id="2.30.30.140:FF:000012">
    <property type="entry name" value="AT-rich interactive domain-containing protein 4A"/>
    <property type="match status" value="1"/>
</dbReference>
<dbReference type="FunFam" id="1.10.150.60:FF:000003">
    <property type="entry name" value="AT-rich interactive domain-containing protein 4B"/>
    <property type="match status" value="1"/>
</dbReference>
<dbReference type="FunFam" id="2.30.30.140:FF:000009">
    <property type="entry name" value="AT-rich interactive domain-containing protein 4B"/>
    <property type="match status" value="1"/>
</dbReference>
<dbReference type="FunFam" id="2.30.30.140:FF:000044">
    <property type="entry name" value="AT-rich interactive domain-containing protein 4B isoform X1"/>
    <property type="match status" value="1"/>
</dbReference>
<dbReference type="Gene3D" id="2.30.30.140">
    <property type="match status" value="3"/>
</dbReference>
<dbReference type="Gene3D" id="1.10.150.60">
    <property type="entry name" value="ARID DNA-binding domain"/>
    <property type="match status" value="1"/>
</dbReference>
<dbReference type="InterPro" id="IPR051232">
    <property type="entry name" value="ARID/SWI1_ChromRemod"/>
</dbReference>
<dbReference type="InterPro" id="IPR012603">
    <property type="entry name" value="ARID4A/B_PWWP"/>
</dbReference>
<dbReference type="InterPro" id="IPR028853">
    <property type="entry name" value="ARID4B_ARID/BRIGHT"/>
</dbReference>
<dbReference type="InterPro" id="IPR001606">
    <property type="entry name" value="ARID_dom"/>
</dbReference>
<dbReference type="InterPro" id="IPR036431">
    <property type="entry name" value="ARID_dom_sf"/>
</dbReference>
<dbReference type="InterPro" id="IPR016197">
    <property type="entry name" value="Chromo-like_dom_sf"/>
</dbReference>
<dbReference type="InterPro" id="IPR002999">
    <property type="entry name" value="Tudor"/>
</dbReference>
<dbReference type="InterPro" id="IPR025995">
    <property type="entry name" value="Tudor-knot"/>
</dbReference>
<dbReference type="InterPro" id="IPR047476">
    <property type="entry name" value="Tudor_ARID4B_rpt1"/>
</dbReference>
<dbReference type="InterPro" id="IPR047474">
    <property type="entry name" value="Tudor_ARID4B_rpt2"/>
</dbReference>
<dbReference type="PANTHER" id="PTHR13964:SF24">
    <property type="entry name" value="AT-RICH INTERACTIVE DOMAIN-CONTAINING PROTEIN 4B"/>
    <property type="match status" value="1"/>
</dbReference>
<dbReference type="PANTHER" id="PTHR13964">
    <property type="entry name" value="RBP-RELATED"/>
    <property type="match status" value="1"/>
</dbReference>
<dbReference type="Pfam" id="PF01388">
    <property type="entry name" value="ARID"/>
    <property type="match status" value="1"/>
</dbReference>
<dbReference type="Pfam" id="PF08169">
    <property type="entry name" value="RBB1NT"/>
    <property type="match status" value="1"/>
</dbReference>
<dbReference type="Pfam" id="PF11717">
    <property type="entry name" value="Tudor-knot"/>
    <property type="match status" value="1"/>
</dbReference>
<dbReference type="SMART" id="SM01014">
    <property type="entry name" value="ARID"/>
    <property type="match status" value="1"/>
</dbReference>
<dbReference type="SMART" id="SM00501">
    <property type="entry name" value="BRIGHT"/>
    <property type="match status" value="1"/>
</dbReference>
<dbReference type="SMART" id="SM00333">
    <property type="entry name" value="TUDOR"/>
    <property type="match status" value="2"/>
</dbReference>
<dbReference type="SUPFAM" id="SSF46774">
    <property type="entry name" value="ARID-like"/>
    <property type="match status" value="1"/>
</dbReference>
<dbReference type="SUPFAM" id="SSF54160">
    <property type="entry name" value="Chromo domain-like"/>
    <property type="match status" value="1"/>
</dbReference>
<dbReference type="SUPFAM" id="SSF63748">
    <property type="entry name" value="Tudor/PWWP/MBT"/>
    <property type="match status" value="1"/>
</dbReference>
<dbReference type="PROSITE" id="PS51011">
    <property type="entry name" value="ARID"/>
    <property type="match status" value="1"/>
</dbReference>
<keyword id="KW-0025">Alternative splicing</keyword>
<keyword id="KW-0156">Chromatin regulator</keyword>
<keyword id="KW-0175">Coiled coil</keyword>
<keyword id="KW-0238">DNA-binding</keyword>
<keyword id="KW-1017">Isopeptide bond</keyword>
<keyword id="KW-0539">Nucleus</keyword>
<keyword id="KW-0597">Phosphoprotein</keyword>
<keyword id="KW-1185">Reference proteome</keyword>
<keyword id="KW-0804">Transcription</keyword>
<keyword id="KW-0805">Transcription regulation</keyword>
<keyword id="KW-0832">Ubl conjugation</keyword>
<evidence type="ECO:0000250" key="1">
    <source>
        <dbReference type="UniProtKB" id="Q4LE39"/>
    </source>
</evidence>
<evidence type="ECO:0000250" key="2">
    <source>
        <dbReference type="UniProtKB" id="Q9JKB5"/>
    </source>
</evidence>
<evidence type="ECO:0000255" key="3"/>
<evidence type="ECO:0000255" key="4">
    <source>
        <dbReference type="PROSITE-ProRule" id="PRU00355"/>
    </source>
</evidence>
<evidence type="ECO:0000256" key="5">
    <source>
        <dbReference type="SAM" id="MobiDB-lite"/>
    </source>
</evidence>
<evidence type="ECO:0000269" key="6">
    <source>
    </source>
</evidence>
<evidence type="ECO:0000269" key="7">
    <source>
    </source>
</evidence>
<evidence type="ECO:0000269" key="8">
    <source>
    </source>
</evidence>
<evidence type="ECO:0000305" key="9"/>
<evidence type="ECO:0007744" key="10">
    <source>
    </source>
</evidence>
<proteinExistence type="evidence at protein level"/>
<sequence length="1314" mass="147643">MKALDEPPYLTVGTDVSAKYRGAFCEAKIKTAKRLVKVKVTFRHDSSTVEVQDDHIKGPLKVGAIVEVKNLDGAYQEAVINKLTDASWYTVVFDDGDEKTLRRSSLCLKGERHFAESETLDQLPLTNPEHFGTPVIGKKTNRGRRSNHIPEEESSSSSSDDDEEERKQTDELLGKVVCVDYVSLEKKKAMWFPALVVCPDCSDEIAVKKDNILVRSFKDGKFTSVPRKDVHEITSDTVPKPDAVLKQAFDQALEFHKSRAIPANWKTELKEDSSSSEAEEEEEEEDDEKEKEDNSSEEEEEIEPFPEERENFLQQLYKFMEDRGTPINKRPVLGYRNLNLFKLFRLVHKLGGFDNIESGAVWKQVYQDLGIPVLNSAAGYNVKCAYKKYLYGFEEYCRSANIDFQMALPEKVLNKPCKDCENKEVKVKEESETEIKEVNVEDSKNVMPKEETPAEDESERKENIKPSLGSKKSLLECIPAQSDEEKEAHITKLEENENLEDKDGGRARTEEAFSTEVDGEEEQARSGDETNKEEDEDDEEIEEEEEEDEEEDEDEDDDDNNEEEEFECYPPGMKVQVRYGRGKNQKMYEASIKDSDVEGGEALYLVHYCGWNVRYDEWIKADKIVRPADKNVPKIKHRKKIKNKLDKEKDRDEKYSPKNCKLRRLSKSPFQSNPSPEMVSKLDLADAKNSDTAHIKSIEITSILNGLQASESSAEDSEQEDERCTQDVDNIGKDESKVEHSTHSRNELISKEEQSSPSLLEENKVHTDLVIAKTVSKSPERLRKDMEAISEDTDFEEEDEITKKRKDVKKDTTDKALKPQTKRGKRRYCSADECLQTGSPGKKEDRTKSKEPLCTENSSNSSSDEDEEEKSKAKMTPTKKYNGLEEKRKSLRTTSFYSGFSEVAEKRIKLLNNSDERLQNNRAKDRKDVWSSIQGQWPKKTLKELFSDSDTEAAASPPHPAPDEGAVEESLQTVAEEESCSPIMELEKPLPASVDNKPIEEKPLEVSDRKTEFPSSGSNSVLNTPPTTPESPSSVTITEASQQQSSVTVSVPLPPNQEEVRSIKSETDSTIEVDSVVGELQDLQSEGNSSPAGFDASVSSSSSNQPEPDNPEKACTGQKRVKDTQGVGSSSKKQKRSHKATVVNNKKKGKGTNSSDSEELSAGESVTKTQTIKSVPTGMKTHNSKSPARVQSPGKGGRNGDKDPDLKEPSNRLPKVYKWSFQTSDLENMTSAERISILQEKLQEIRKHYLSLKSEVASIDRRRKRLKKKERESAATSSSSSSPSSSSITAAVMLTLAEPSMSSASQNGMSVECR</sequence>
<comment type="function">
    <text evidence="1 6 7 8">Acts as a transcriptional repressor. May function in the assembly and/or enzymatic activity of the Sin3A corepressor complex or in mediating interactions between the complex and other regulatory complexes (By similarity). Plays a role in the regulation of epigenetic modifications at the PWS/AS imprinting center near the SNRPN promoter, where it might function as part of a complex with RB1 and ARID4A (PubMed:17043311). Involved in spermatogenesis, together with ARID4A, where it functions as a transcriptional coactivator for AR (androgen receptor) and enhances expression of genes required for sperm maturation. Regulates expression of the tight junction protein CLDN3 in the testis, which is important for integrity of the blood-testis barrier (PubMed:23487765). Plays a role in myeloid homeostasis where it regulates the histone methylation state of bone marrow cells and expression of various genes involved in hematopoiesis. May function as a leukemia suppressor (PubMed:18728284).</text>
</comment>
<comment type="subunit">
    <text evidence="1 6 8">Component of a Sin3A corepressor complex consisting of SIN3A, SAP130, SUDS3/SAP45, SAP180, HDAC1 and HDAC2 (By similarity). Interacts with ARID4A (PubMed:17043311). Interacts with AR (PubMed:23487765).</text>
</comment>
<comment type="interaction">
    <interactant intactId="EBI-6394082">
        <id>A2CG63</id>
    </interactant>
    <interactant intactId="EBI-6394115">
        <id>P70278</id>
        <label>Stra8</label>
    </interactant>
    <organismsDiffer>false</organismsDiffer>
    <experiments>4</experiments>
</comment>
<comment type="subcellular location">
    <subcellularLocation>
        <location evidence="4">Nucleus</location>
    </subcellularLocation>
</comment>
<comment type="alternative products">
    <event type="alternative splicing"/>
    <isoform>
        <id>A2CG63-1</id>
        <name>1</name>
        <sequence type="displayed"/>
    </isoform>
    <isoform>
        <id>A2CG63-2</id>
        <name>2</name>
        <sequence type="described" ref="VSP_024236"/>
    </isoform>
</comment>
<comment type="tissue specificity">
    <text evidence="8">Expressed in Sertoli cells of the testis.</text>
</comment>
<comment type="domain">
    <text evidence="1">The C-terminus mediates interaction with mSin3A corepressor complex.</text>
</comment>
<comment type="domain">
    <text evidence="1">The N-terminus is involved in transcriptional repression by HDAC-independent mechanisms.</text>
</comment>
<comment type="domain">
    <text evidence="1">The ARID domain is involved in stabilizing the mSin3A corepressor complex on DNA.</text>
</comment>
<comment type="disruption phenotype">
    <text evidence="6 7 8">Embryonic lethal. Lethality occurs between embryonic day E3.5 and E7.5 (PubMed:17043311). Heterozygous males are fully fertile (PubMed:23487765). Double knockouts of ARID4B heterozygotes with ARID4A homozygotes show various hematological abnormalities, which are more severe than the ARID4A phenotype alone. Hematopoietic stem cell (HSC) and common myeloid progenitor (CMP) counts in bone marrow and spleen are increased. Lymphocyte numbers in spleen are significantly reduced. In peripheral blood, red blood cell counts and lymphocyte counts are reduced. Approximately 83% of animals develop acute myeloid leukemia (AML) and/or myeloid sarcoma. In bone marrow cells, expression of FOXP3 is significantly reduced (PubMed:18728284). Expression of HOXB3, HOXB5, HOXB6, HOXB8 and PITX2 in bone marrow cells is reduced (PubMed:17043311). Males show progressive reduction in fertility from 2 months of age onwards, with reduced testis size and variable defects in seminal vesicle formation. Spermatogenesis is partially blocked from the meiosis II stage onwards leading to reduced numbers of mature spermatozoa. Expression in testis of CLDN3, an androgen receptor-regulated gene, is significantly reduced. Expression of PTGDS is also reduced, whereas expression of INHA and EMB is moderately increased (PubMed:23487765).</text>
</comment>
<comment type="sequence caution" evidence="9">
    <conflict type="erroneous gene model prediction">
        <sequence resource="EMBL-CDS" id="CAM21242"/>
    </conflict>
</comment>
<accession>A2CG63</accession>
<accession>A2CG61</accession>
<accession>A2CG62</accession>
<accession>A2CG64</accession>
<accession>B2RQ67</accession>
<accession>Q8BMI8</accession>
<accession>Q8BYA5</accession>
<organism>
    <name type="scientific">Mus musculus</name>
    <name type="common">Mouse</name>
    <dbReference type="NCBI Taxonomy" id="10090"/>
    <lineage>
        <taxon>Eukaryota</taxon>
        <taxon>Metazoa</taxon>
        <taxon>Chordata</taxon>
        <taxon>Craniata</taxon>
        <taxon>Vertebrata</taxon>
        <taxon>Euteleostomi</taxon>
        <taxon>Mammalia</taxon>
        <taxon>Eutheria</taxon>
        <taxon>Euarchontoglires</taxon>
        <taxon>Glires</taxon>
        <taxon>Rodentia</taxon>
        <taxon>Myomorpha</taxon>
        <taxon>Muroidea</taxon>
        <taxon>Muridae</taxon>
        <taxon>Murinae</taxon>
        <taxon>Mus</taxon>
        <taxon>Mus</taxon>
    </lineage>
</organism>
<name>ARI4B_MOUSE</name>